<feature type="transit peptide" description="Chloroplast" evidence="4">
    <location>
        <begin position="1"/>
        <end position="39"/>
    </location>
</feature>
<feature type="chain" id="PRO_0000402121" description="Geranylgeranyl pyrophosphate synthase 7, chloroplastic">
    <location>
        <begin position="40"/>
        <end position="347"/>
    </location>
</feature>
<feature type="binding site" evidence="2">
    <location>
        <position position="95"/>
    </location>
    <ligand>
        <name>isopentenyl diphosphate</name>
        <dbReference type="ChEBI" id="CHEBI:128769"/>
    </ligand>
</feature>
<feature type="binding site" evidence="2">
    <location>
        <position position="98"/>
    </location>
    <ligand>
        <name>isopentenyl diphosphate</name>
        <dbReference type="ChEBI" id="CHEBI:128769"/>
    </ligand>
</feature>
<feature type="binding site" evidence="3">
    <location>
        <position position="127"/>
    </location>
    <ligand>
        <name>isopentenyl diphosphate</name>
        <dbReference type="ChEBI" id="CHEBI:128769"/>
    </ligand>
</feature>
<feature type="binding site" evidence="2">
    <location>
        <position position="134"/>
    </location>
    <ligand>
        <name>Mg(2+)</name>
        <dbReference type="ChEBI" id="CHEBI:18420"/>
        <label>1</label>
    </ligand>
</feature>
<feature type="binding site" evidence="2">
    <location>
        <position position="134"/>
    </location>
    <ligand>
        <name>Mg(2+)</name>
        <dbReference type="ChEBI" id="CHEBI:18420"/>
        <label>2</label>
    </ligand>
</feature>
<feature type="binding site" evidence="2">
    <location>
        <position position="140"/>
    </location>
    <ligand>
        <name>Mg(2+)</name>
        <dbReference type="ChEBI" id="CHEBI:18420"/>
        <label>1</label>
    </ligand>
</feature>
<feature type="binding site" evidence="2">
    <location>
        <position position="140"/>
    </location>
    <ligand>
        <name>Mg(2+)</name>
        <dbReference type="ChEBI" id="CHEBI:18420"/>
        <label>2</label>
    </ligand>
</feature>
<feature type="binding site" evidence="1">
    <location>
        <position position="145"/>
    </location>
    <ligand>
        <name>dimethylallyl diphosphate</name>
        <dbReference type="ChEBI" id="CHEBI:57623"/>
    </ligand>
</feature>
<feature type="binding site" evidence="2">
    <location>
        <position position="146"/>
    </location>
    <ligand>
        <name>isopentenyl diphosphate</name>
        <dbReference type="ChEBI" id="CHEBI:128769"/>
    </ligand>
</feature>
<feature type="binding site" evidence="1">
    <location>
        <position position="232"/>
    </location>
    <ligand>
        <name>dimethylallyl diphosphate</name>
        <dbReference type="ChEBI" id="CHEBI:57623"/>
    </ligand>
</feature>
<feature type="binding site" evidence="1">
    <location>
        <position position="233"/>
    </location>
    <ligand>
        <name>dimethylallyl diphosphate</name>
        <dbReference type="ChEBI" id="CHEBI:57623"/>
    </ligand>
</feature>
<feature type="binding site" evidence="1">
    <location>
        <position position="270"/>
    </location>
    <ligand>
        <name>dimethylallyl diphosphate</name>
        <dbReference type="ChEBI" id="CHEBI:57623"/>
    </ligand>
</feature>
<feature type="binding site" evidence="1">
    <location>
        <position position="287"/>
    </location>
    <ligand>
        <name>dimethylallyl diphosphate</name>
        <dbReference type="ChEBI" id="CHEBI:57623"/>
    </ligand>
</feature>
<feature type="binding site" evidence="1">
    <location>
        <position position="297"/>
    </location>
    <ligand>
        <name>dimethylallyl diphosphate</name>
        <dbReference type="ChEBI" id="CHEBI:57623"/>
    </ligand>
</feature>
<organism>
    <name type="scientific">Arabidopsis thaliana</name>
    <name type="common">Mouse-ear cress</name>
    <dbReference type="NCBI Taxonomy" id="3702"/>
    <lineage>
        <taxon>Eukaryota</taxon>
        <taxon>Viridiplantae</taxon>
        <taxon>Streptophyta</taxon>
        <taxon>Embryophyta</taxon>
        <taxon>Tracheophyta</taxon>
        <taxon>Spermatophyta</taxon>
        <taxon>Magnoliopsida</taxon>
        <taxon>eudicotyledons</taxon>
        <taxon>Gunneridae</taxon>
        <taxon>Pentapetalae</taxon>
        <taxon>rosids</taxon>
        <taxon>malvids</taxon>
        <taxon>Brassicales</taxon>
        <taxon>Brassicaceae</taxon>
        <taxon>Camelineae</taxon>
        <taxon>Arabidopsis</taxon>
    </lineage>
</organism>
<proteinExistence type="evidence at transcript level"/>
<comment type="function">
    <text evidence="1">Catalyzes the trans-addition of the three molecules of IPP onto DMAPP to form geranylgeranyl pyrophosphate.</text>
</comment>
<comment type="catalytic activity">
    <reaction>
        <text>isopentenyl diphosphate + dimethylallyl diphosphate = (2E)-geranyl diphosphate + diphosphate</text>
        <dbReference type="Rhea" id="RHEA:22408"/>
        <dbReference type="ChEBI" id="CHEBI:33019"/>
        <dbReference type="ChEBI" id="CHEBI:57623"/>
        <dbReference type="ChEBI" id="CHEBI:58057"/>
        <dbReference type="ChEBI" id="CHEBI:128769"/>
        <dbReference type="EC" id="2.5.1.1"/>
    </reaction>
</comment>
<comment type="catalytic activity">
    <reaction>
        <text>isopentenyl diphosphate + (2E)-geranyl diphosphate = (2E,6E)-farnesyl diphosphate + diphosphate</text>
        <dbReference type="Rhea" id="RHEA:19361"/>
        <dbReference type="ChEBI" id="CHEBI:33019"/>
        <dbReference type="ChEBI" id="CHEBI:58057"/>
        <dbReference type="ChEBI" id="CHEBI:128769"/>
        <dbReference type="ChEBI" id="CHEBI:175763"/>
        <dbReference type="EC" id="2.5.1.10"/>
    </reaction>
</comment>
<comment type="catalytic activity">
    <reaction>
        <text>isopentenyl diphosphate + (2E,6E)-farnesyl diphosphate = (2E,6E,10E)-geranylgeranyl diphosphate + diphosphate</text>
        <dbReference type="Rhea" id="RHEA:17653"/>
        <dbReference type="ChEBI" id="CHEBI:33019"/>
        <dbReference type="ChEBI" id="CHEBI:58756"/>
        <dbReference type="ChEBI" id="CHEBI:128769"/>
        <dbReference type="ChEBI" id="CHEBI:175763"/>
        <dbReference type="EC" id="2.5.1.29"/>
    </reaction>
</comment>
<comment type="cofactor">
    <cofactor evidence="1">
        <name>Mg(2+)</name>
        <dbReference type="ChEBI" id="CHEBI:18420"/>
    </cofactor>
    <text evidence="1">Binds 2 Mg(2+) ions per subunit.</text>
</comment>
<comment type="pathway">
    <text>Isoprenoid biosynthesis; farnesyl diphosphate biosynthesis; farnesyl diphosphate from geranyl diphosphate and isopentenyl diphosphate: step 1/1.</text>
</comment>
<comment type="pathway">
    <text>Isoprenoid biosynthesis; geranyl diphosphate biosynthesis; geranyl diphosphate from dimethylallyl diphosphate and isopentenyl diphosphate: step 1/1.</text>
</comment>
<comment type="pathway">
    <text>Isoprenoid biosynthesis; geranylgeranyl diphosphate biosynthesis; geranylgeranyl diphosphate from farnesyl diphosphate and isopentenyl diphosphate: step 1/1.</text>
</comment>
<comment type="subunit">
    <text evidence="1">Monomer.</text>
</comment>
<comment type="subcellular location">
    <subcellularLocation>
        <location evidence="5">Plastid</location>
        <location evidence="5">Chloroplast</location>
    </subcellularLocation>
</comment>
<comment type="similarity">
    <text evidence="5">Belongs to the FPP/GGPP synthase family.</text>
</comment>
<comment type="sequence caution" evidence="5">
    <conflict type="erroneous termination">
        <sequence resource="EMBL-CDS" id="ABK28497"/>
    </conflict>
    <text>Extended C-terminus.</text>
</comment>
<keyword id="KW-0125">Carotenoid biosynthesis</keyword>
<keyword id="KW-0150">Chloroplast</keyword>
<keyword id="KW-0414">Isoprene biosynthesis</keyword>
<keyword id="KW-0460">Magnesium</keyword>
<keyword id="KW-0479">Metal-binding</keyword>
<keyword id="KW-0934">Plastid</keyword>
<keyword id="KW-1185">Reference proteome</keyword>
<keyword id="KW-0808">Transferase</keyword>
<keyword id="KW-0809">Transit peptide</keyword>
<accession>Q9ZU77</accession>
<accession>A0MEM7</accession>
<sequence length="347" mass="37390">MTTLNLSIFPSVKISSSASIPGFIKIQPFLLRRKLSTVLSVTARDEGIIHNHFDFTSYMIGKANAVNEALDSAVSLREPIKIHEAIRYSLLARGKRVRPVLCIAACELVGGEESVALPAACAVEMIHTMSLIHDDLPCMDNDDLRRGKPTNHKVFGEDVAVLAGDALISFAFEHLATSTAVSPARVVRAIGELAKAIGSKGLVAGQVVDLTSGGMDQNDVGLEVLEFIHVHKTAVLLEAATVLGAIVGGGSDEEVEKLRRFARCIGLLFQVVDDILDVTKSSEELGKTAGKDLIADKLTYPKLMGLEKSKDFADKLLSDAHEQLHGFDSSRVKPLLALANYIAKRQN</sequence>
<reference key="1">
    <citation type="journal article" date="1999" name="Nature">
        <title>Sequence and analysis of chromosome 2 of the plant Arabidopsis thaliana.</title>
        <authorList>
            <person name="Lin X."/>
            <person name="Kaul S."/>
            <person name="Rounsley S.D."/>
            <person name="Shea T.P."/>
            <person name="Benito M.-I."/>
            <person name="Town C.D."/>
            <person name="Fujii C.Y."/>
            <person name="Mason T.M."/>
            <person name="Bowman C.L."/>
            <person name="Barnstead M.E."/>
            <person name="Feldblyum T.V."/>
            <person name="Buell C.R."/>
            <person name="Ketchum K.A."/>
            <person name="Lee J.J."/>
            <person name="Ronning C.M."/>
            <person name="Koo H.L."/>
            <person name="Moffat K.S."/>
            <person name="Cronin L.A."/>
            <person name="Shen M."/>
            <person name="Pai G."/>
            <person name="Van Aken S."/>
            <person name="Umayam L."/>
            <person name="Tallon L.J."/>
            <person name="Gill J.E."/>
            <person name="Adams M.D."/>
            <person name="Carrera A.J."/>
            <person name="Creasy T.H."/>
            <person name="Goodman H.M."/>
            <person name="Somerville C.R."/>
            <person name="Copenhaver G.P."/>
            <person name="Preuss D."/>
            <person name="Nierman W.C."/>
            <person name="White O."/>
            <person name="Eisen J.A."/>
            <person name="Salzberg S.L."/>
            <person name="Fraser C.M."/>
            <person name="Venter J.C."/>
        </authorList>
    </citation>
    <scope>NUCLEOTIDE SEQUENCE [LARGE SCALE GENOMIC DNA]</scope>
    <source>
        <strain>cv. Columbia</strain>
    </source>
</reference>
<reference key="2">
    <citation type="journal article" date="2017" name="Plant J.">
        <title>Araport11: a complete reannotation of the Arabidopsis thaliana reference genome.</title>
        <authorList>
            <person name="Cheng C.Y."/>
            <person name="Krishnakumar V."/>
            <person name="Chan A.P."/>
            <person name="Thibaud-Nissen F."/>
            <person name="Schobel S."/>
            <person name="Town C.D."/>
        </authorList>
    </citation>
    <scope>GENOME REANNOTATION</scope>
    <source>
        <strain>cv. Columbia</strain>
    </source>
</reference>
<reference key="3">
    <citation type="journal article" date="2006" name="Plant Biotechnol. J.">
        <title>Simultaneous high-throughput recombinational cloning of open reading frames in closed and open configurations.</title>
        <authorList>
            <person name="Underwood B.A."/>
            <person name="Vanderhaeghen R."/>
            <person name="Whitford R."/>
            <person name="Town C.D."/>
            <person name="Hilson P."/>
        </authorList>
    </citation>
    <scope>NUCLEOTIDE SEQUENCE [LARGE SCALE MRNA]</scope>
    <source>
        <strain>cv. Columbia</strain>
    </source>
</reference>
<gene>
    <name type="ordered locus">At2g18620</name>
    <name type="ORF">F24H14.3</name>
</gene>
<dbReference type="EC" id="2.5.1.-"/>
<dbReference type="EC" id="2.5.1.1"/>
<dbReference type="EC" id="2.5.1.29"/>
<dbReference type="EC" id="2.5.1.10"/>
<dbReference type="EMBL" id="AC006135">
    <property type="protein sequence ID" value="AAD12206.1"/>
    <property type="molecule type" value="Genomic_DNA"/>
</dbReference>
<dbReference type="EMBL" id="CP002685">
    <property type="protein sequence ID" value="AEC06786.1"/>
    <property type="molecule type" value="Genomic_DNA"/>
</dbReference>
<dbReference type="EMBL" id="DQ446520">
    <property type="protein sequence ID" value="ABE65825.1"/>
    <property type="molecule type" value="mRNA"/>
</dbReference>
<dbReference type="EMBL" id="DQ652999">
    <property type="protein sequence ID" value="ABK28497.1"/>
    <property type="status" value="ALT_SEQ"/>
    <property type="molecule type" value="mRNA"/>
</dbReference>
<dbReference type="PIR" id="E84566">
    <property type="entry name" value="E84566"/>
</dbReference>
<dbReference type="RefSeq" id="NP_179452.1">
    <property type="nucleotide sequence ID" value="NM_127418.2"/>
</dbReference>
<dbReference type="SMR" id="Q9ZU77"/>
<dbReference type="BioGRID" id="1734">
    <property type="interactions" value="1"/>
</dbReference>
<dbReference type="FunCoup" id="Q9ZU77">
    <property type="interactions" value="18"/>
</dbReference>
<dbReference type="STRING" id="3702.Q9ZU77"/>
<dbReference type="iPTMnet" id="Q9ZU77"/>
<dbReference type="PaxDb" id="3702-AT2G18620.1"/>
<dbReference type="ProteomicsDB" id="220746"/>
<dbReference type="EnsemblPlants" id="AT2G18620.1">
    <property type="protein sequence ID" value="AT2G18620.1"/>
    <property type="gene ID" value="AT2G18620"/>
</dbReference>
<dbReference type="GeneID" id="816377"/>
<dbReference type="Gramene" id="AT2G18620.1">
    <property type="protein sequence ID" value="AT2G18620.1"/>
    <property type="gene ID" value="AT2G18620"/>
</dbReference>
<dbReference type="KEGG" id="ath:AT2G18620"/>
<dbReference type="Araport" id="AT2G18620"/>
<dbReference type="TAIR" id="AT2G18620">
    <property type="gene designation" value="GGPPS2"/>
</dbReference>
<dbReference type="eggNOG" id="KOG0776">
    <property type="taxonomic scope" value="Eukaryota"/>
</dbReference>
<dbReference type="HOGENOM" id="CLU_014015_0_0_1"/>
<dbReference type="InParanoid" id="Q9ZU77"/>
<dbReference type="OMA" id="GQAWECE"/>
<dbReference type="PhylomeDB" id="Q9ZU77"/>
<dbReference type="BioCyc" id="ARA:AT2G18620-MONOMER"/>
<dbReference type="UniPathway" id="UPA00259">
    <property type="reaction ID" value="UER00368"/>
</dbReference>
<dbReference type="UniPathway" id="UPA00260">
    <property type="reaction ID" value="UER00369"/>
</dbReference>
<dbReference type="UniPathway" id="UPA00389">
    <property type="reaction ID" value="UER00564"/>
</dbReference>
<dbReference type="PRO" id="PR:Q9ZU77"/>
<dbReference type="Proteomes" id="UP000006548">
    <property type="component" value="Chromosome 2"/>
</dbReference>
<dbReference type="ExpressionAtlas" id="Q9ZU77">
    <property type="expression patterns" value="baseline and differential"/>
</dbReference>
<dbReference type="GO" id="GO:0009507">
    <property type="term" value="C:chloroplast"/>
    <property type="evidence" value="ECO:0000314"/>
    <property type="project" value="TAIR"/>
</dbReference>
<dbReference type="GO" id="GO:0004337">
    <property type="term" value="F:(2E,6E)-farnesyl diphosphate synthase activity"/>
    <property type="evidence" value="ECO:0007669"/>
    <property type="project" value="UniProtKB-EC"/>
</dbReference>
<dbReference type="GO" id="GO:0004161">
    <property type="term" value="F:dimethylallyltranstransferase activity"/>
    <property type="evidence" value="ECO:0007669"/>
    <property type="project" value="UniProtKB-EC"/>
</dbReference>
<dbReference type="GO" id="GO:0004311">
    <property type="term" value="F:geranylgeranyl diphosphate synthase activity"/>
    <property type="evidence" value="ECO:0007669"/>
    <property type="project" value="UniProtKB-EC"/>
</dbReference>
<dbReference type="GO" id="GO:0046872">
    <property type="term" value="F:metal ion binding"/>
    <property type="evidence" value="ECO:0007669"/>
    <property type="project" value="UniProtKB-KW"/>
</dbReference>
<dbReference type="GO" id="GO:0016117">
    <property type="term" value="P:carotenoid biosynthetic process"/>
    <property type="evidence" value="ECO:0007669"/>
    <property type="project" value="UniProtKB-KW"/>
</dbReference>
<dbReference type="GO" id="GO:0045337">
    <property type="term" value="P:farnesyl diphosphate biosynthetic process"/>
    <property type="evidence" value="ECO:0007669"/>
    <property type="project" value="UniProtKB-UniPathway"/>
</dbReference>
<dbReference type="GO" id="GO:0033384">
    <property type="term" value="P:geranyl diphosphate biosynthetic process"/>
    <property type="evidence" value="ECO:0007669"/>
    <property type="project" value="UniProtKB-UniPathway"/>
</dbReference>
<dbReference type="GO" id="GO:0033386">
    <property type="term" value="P:geranylgeranyl diphosphate biosynthetic process"/>
    <property type="evidence" value="ECO:0007669"/>
    <property type="project" value="UniProtKB-UniPathway"/>
</dbReference>
<dbReference type="CDD" id="cd00685">
    <property type="entry name" value="Trans_IPPS_HT"/>
    <property type="match status" value="1"/>
</dbReference>
<dbReference type="FunFam" id="1.10.600.10:FF:000001">
    <property type="entry name" value="Geranylgeranyl diphosphate synthase"/>
    <property type="match status" value="1"/>
</dbReference>
<dbReference type="Gene3D" id="1.10.600.10">
    <property type="entry name" value="Farnesyl Diphosphate Synthase"/>
    <property type="match status" value="1"/>
</dbReference>
<dbReference type="InterPro" id="IPR008949">
    <property type="entry name" value="Isoprenoid_synthase_dom_sf"/>
</dbReference>
<dbReference type="InterPro" id="IPR000092">
    <property type="entry name" value="Polyprenyl_synt"/>
</dbReference>
<dbReference type="InterPro" id="IPR033749">
    <property type="entry name" value="Polyprenyl_synt_CS"/>
</dbReference>
<dbReference type="InterPro" id="IPR053378">
    <property type="entry name" value="Prenyl_diphosphate_synthase"/>
</dbReference>
<dbReference type="NCBIfam" id="NF045485">
    <property type="entry name" value="FPPsyn"/>
    <property type="match status" value="1"/>
</dbReference>
<dbReference type="PANTHER" id="PTHR43281">
    <property type="entry name" value="FARNESYL DIPHOSPHATE SYNTHASE"/>
    <property type="match status" value="1"/>
</dbReference>
<dbReference type="PANTHER" id="PTHR43281:SF33">
    <property type="entry name" value="GERANYLGERANYL PYROPHOSPHATE SYNTHASE 7, CHLOROPLASTIC"/>
    <property type="match status" value="1"/>
</dbReference>
<dbReference type="Pfam" id="PF00348">
    <property type="entry name" value="polyprenyl_synt"/>
    <property type="match status" value="1"/>
</dbReference>
<dbReference type="SFLD" id="SFLDS00005">
    <property type="entry name" value="Isoprenoid_Synthase_Type_I"/>
    <property type="match status" value="1"/>
</dbReference>
<dbReference type="SFLD" id="SFLDG01017">
    <property type="entry name" value="Polyprenyl_Transferase_Like"/>
    <property type="match status" value="1"/>
</dbReference>
<dbReference type="SUPFAM" id="SSF48576">
    <property type="entry name" value="Terpenoid synthases"/>
    <property type="match status" value="1"/>
</dbReference>
<dbReference type="PROSITE" id="PS00723">
    <property type="entry name" value="POLYPRENYL_SYNTHASE_1"/>
    <property type="match status" value="1"/>
</dbReference>
<dbReference type="PROSITE" id="PS00444">
    <property type="entry name" value="POLYPRENYL_SYNTHASE_2"/>
    <property type="match status" value="1"/>
</dbReference>
<evidence type="ECO:0000250" key="1"/>
<evidence type="ECO:0000250" key="2">
    <source>
        <dbReference type="UniProtKB" id="P14324"/>
    </source>
</evidence>
<evidence type="ECO:0000250" key="3">
    <source>
        <dbReference type="UniProtKB" id="Q12051"/>
    </source>
</evidence>
<evidence type="ECO:0000255" key="4"/>
<evidence type="ECO:0000305" key="5"/>
<name>GGPP7_ARATH</name>
<protein>
    <recommendedName>
        <fullName>Geranylgeranyl pyrophosphate synthase 7, chloroplastic</fullName>
        <shortName>GGPP synthase 7</shortName>
        <shortName>GGPS7</shortName>
        <ecNumber>2.5.1.-</ecNumber>
    </recommendedName>
    <alternativeName>
        <fullName>(2E,6E)-farnesyl diphosphate synthase 7</fullName>
    </alternativeName>
    <alternativeName>
        <fullName>Dimethylallyltranstransferase 7</fullName>
        <ecNumber>2.5.1.1</ecNumber>
    </alternativeName>
    <alternativeName>
        <fullName>Farnesyl diphosphate synthase 7</fullName>
    </alternativeName>
    <alternativeName>
        <fullName>Farnesyltranstransferase 7</fullName>
        <ecNumber>2.5.1.29</ecNumber>
    </alternativeName>
    <alternativeName>
        <fullName>Geranyltranstransferase 7</fullName>
        <ecNumber>2.5.1.10</ecNumber>
    </alternativeName>
</protein>